<proteinExistence type="inferred from homology"/>
<accession>Q28RG1</accession>
<feature type="chain" id="PRO_1000056369" description="Beta-ketoacyl-[acyl-carrier-protein] synthase III">
    <location>
        <begin position="1"/>
        <end position="326"/>
    </location>
</feature>
<feature type="region of interest" description="ACP-binding" evidence="1">
    <location>
        <begin position="254"/>
        <end position="258"/>
    </location>
</feature>
<feature type="active site" evidence="1">
    <location>
        <position position="116"/>
    </location>
</feature>
<feature type="active site" evidence="1">
    <location>
        <position position="253"/>
    </location>
</feature>
<feature type="active site" evidence="1">
    <location>
        <position position="283"/>
    </location>
</feature>
<organism>
    <name type="scientific">Jannaschia sp. (strain CCS1)</name>
    <dbReference type="NCBI Taxonomy" id="290400"/>
    <lineage>
        <taxon>Bacteria</taxon>
        <taxon>Pseudomonadati</taxon>
        <taxon>Pseudomonadota</taxon>
        <taxon>Alphaproteobacteria</taxon>
        <taxon>Rhodobacterales</taxon>
        <taxon>Roseobacteraceae</taxon>
        <taxon>Jannaschia</taxon>
    </lineage>
</organism>
<name>FABH_JANSC</name>
<dbReference type="EC" id="2.3.1.180" evidence="1"/>
<dbReference type="EMBL" id="CP000264">
    <property type="protein sequence ID" value="ABD54701.1"/>
    <property type="molecule type" value="Genomic_DNA"/>
</dbReference>
<dbReference type="RefSeq" id="WP_011454906.1">
    <property type="nucleotide sequence ID" value="NC_007802.1"/>
</dbReference>
<dbReference type="SMR" id="Q28RG1"/>
<dbReference type="STRING" id="290400.Jann_1784"/>
<dbReference type="KEGG" id="jan:Jann_1784"/>
<dbReference type="eggNOG" id="COG0332">
    <property type="taxonomic scope" value="Bacteria"/>
</dbReference>
<dbReference type="HOGENOM" id="CLU_039592_3_1_5"/>
<dbReference type="OrthoDB" id="9815506at2"/>
<dbReference type="UniPathway" id="UPA00094"/>
<dbReference type="Proteomes" id="UP000008326">
    <property type="component" value="Chromosome"/>
</dbReference>
<dbReference type="GO" id="GO:0005737">
    <property type="term" value="C:cytoplasm"/>
    <property type="evidence" value="ECO:0007669"/>
    <property type="project" value="UniProtKB-SubCell"/>
</dbReference>
<dbReference type="GO" id="GO:0004315">
    <property type="term" value="F:3-oxoacyl-[acyl-carrier-protein] synthase activity"/>
    <property type="evidence" value="ECO:0007669"/>
    <property type="project" value="InterPro"/>
</dbReference>
<dbReference type="GO" id="GO:0033818">
    <property type="term" value="F:beta-ketoacyl-acyl-carrier-protein synthase III activity"/>
    <property type="evidence" value="ECO:0007669"/>
    <property type="project" value="UniProtKB-UniRule"/>
</dbReference>
<dbReference type="GO" id="GO:0006633">
    <property type="term" value="P:fatty acid biosynthetic process"/>
    <property type="evidence" value="ECO:0007669"/>
    <property type="project" value="UniProtKB-UniRule"/>
</dbReference>
<dbReference type="GO" id="GO:0044550">
    <property type="term" value="P:secondary metabolite biosynthetic process"/>
    <property type="evidence" value="ECO:0007669"/>
    <property type="project" value="TreeGrafter"/>
</dbReference>
<dbReference type="CDD" id="cd00830">
    <property type="entry name" value="KAS_III"/>
    <property type="match status" value="1"/>
</dbReference>
<dbReference type="FunFam" id="3.40.47.10:FF:000004">
    <property type="entry name" value="3-oxoacyl-[acyl-carrier-protein] synthase 3"/>
    <property type="match status" value="1"/>
</dbReference>
<dbReference type="Gene3D" id="3.40.47.10">
    <property type="match status" value="1"/>
</dbReference>
<dbReference type="HAMAP" id="MF_01815">
    <property type="entry name" value="FabH"/>
    <property type="match status" value="1"/>
</dbReference>
<dbReference type="InterPro" id="IPR013747">
    <property type="entry name" value="ACP_syn_III_C"/>
</dbReference>
<dbReference type="InterPro" id="IPR013751">
    <property type="entry name" value="ACP_syn_III_N"/>
</dbReference>
<dbReference type="InterPro" id="IPR004655">
    <property type="entry name" value="FabH"/>
</dbReference>
<dbReference type="InterPro" id="IPR016039">
    <property type="entry name" value="Thiolase-like"/>
</dbReference>
<dbReference type="NCBIfam" id="TIGR00747">
    <property type="entry name" value="fabH"/>
    <property type="match status" value="1"/>
</dbReference>
<dbReference type="NCBIfam" id="NF006829">
    <property type="entry name" value="PRK09352.1"/>
    <property type="match status" value="1"/>
</dbReference>
<dbReference type="PANTHER" id="PTHR34069">
    <property type="entry name" value="3-OXOACYL-[ACYL-CARRIER-PROTEIN] SYNTHASE 3"/>
    <property type="match status" value="1"/>
</dbReference>
<dbReference type="PANTHER" id="PTHR34069:SF2">
    <property type="entry name" value="BETA-KETOACYL-[ACYL-CARRIER-PROTEIN] SYNTHASE III"/>
    <property type="match status" value="1"/>
</dbReference>
<dbReference type="Pfam" id="PF08545">
    <property type="entry name" value="ACP_syn_III"/>
    <property type="match status" value="1"/>
</dbReference>
<dbReference type="Pfam" id="PF08541">
    <property type="entry name" value="ACP_syn_III_C"/>
    <property type="match status" value="1"/>
</dbReference>
<dbReference type="SUPFAM" id="SSF53901">
    <property type="entry name" value="Thiolase-like"/>
    <property type="match status" value="1"/>
</dbReference>
<comment type="function">
    <text evidence="1">Catalyzes the condensation reaction of fatty acid synthesis by the addition to an acyl acceptor of two carbons from malonyl-ACP. Catalyzes the first condensation reaction which initiates fatty acid synthesis and may therefore play a role in governing the total rate of fatty acid production. Possesses both acetoacetyl-ACP synthase and acetyl transacylase activities. Its substrate specificity determines the biosynthesis of branched-chain and/or straight-chain of fatty acids.</text>
</comment>
<comment type="catalytic activity">
    <reaction evidence="1">
        <text>malonyl-[ACP] + acetyl-CoA + H(+) = 3-oxobutanoyl-[ACP] + CO2 + CoA</text>
        <dbReference type="Rhea" id="RHEA:12080"/>
        <dbReference type="Rhea" id="RHEA-COMP:9623"/>
        <dbReference type="Rhea" id="RHEA-COMP:9625"/>
        <dbReference type="ChEBI" id="CHEBI:15378"/>
        <dbReference type="ChEBI" id="CHEBI:16526"/>
        <dbReference type="ChEBI" id="CHEBI:57287"/>
        <dbReference type="ChEBI" id="CHEBI:57288"/>
        <dbReference type="ChEBI" id="CHEBI:78449"/>
        <dbReference type="ChEBI" id="CHEBI:78450"/>
        <dbReference type="EC" id="2.3.1.180"/>
    </reaction>
</comment>
<comment type="pathway">
    <text evidence="1">Lipid metabolism; fatty acid biosynthesis.</text>
</comment>
<comment type="subunit">
    <text evidence="1">Homodimer.</text>
</comment>
<comment type="subcellular location">
    <subcellularLocation>
        <location evidence="1">Cytoplasm</location>
    </subcellularLocation>
</comment>
<comment type="domain">
    <text evidence="1">The last Arg residue of the ACP-binding site is essential for the weak association between ACP/AcpP and FabH.</text>
</comment>
<comment type="similarity">
    <text evidence="1">Belongs to the thiolase-like superfamily. FabH family.</text>
</comment>
<sequence>MIIRAVPVGIGHYLPERVVPNAEFEAMEGLETSDEWIRARSGIERRHFAAEGETTSQMAVTAARKALDHAALNPDDIDAVIVATSTPDLTFPSVATMVQAGLGMTGGFAFDVQAVCAGFVYALANANALIVSGQANRVLVIGAETFSRIMDWTDRTTCVLFGDGAGALILEGRDSAGTPQDRGILSTDLHSDGTHRELLYVDGGVSSTGTTGVLKMQGKEVFRHAIEKLTKTADTGLAKAGVTVGDVDWVVPHQANIRIISGTVKKFGLPMDKVIVTVQDHGNTSAASIPLAMSVGVGDGRIQPGHLLVTEAIGGGLAWGAVVMRW</sequence>
<evidence type="ECO:0000255" key="1">
    <source>
        <dbReference type="HAMAP-Rule" id="MF_01815"/>
    </source>
</evidence>
<gene>
    <name evidence="1" type="primary">fabH</name>
    <name type="ordered locus">Jann_1784</name>
</gene>
<keyword id="KW-0012">Acyltransferase</keyword>
<keyword id="KW-0963">Cytoplasm</keyword>
<keyword id="KW-0275">Fatty acid biosynthesis</keyword>
<keyword id="KW-0276">Fatty acid metabolism</keyword>
<keyword id="KW-0444">Lipid biosynthesis</keyword>
<keyword id="KW-0443">Lipid metabolism</keyword>
<keyword id="KW-0511">Multifunctional enzyme</keyword>
<keyword id="KW-1185">Reference proteome</keyword>
<keyword id="KW-0808">Transferase</keyword>
<reference key="1">
    <citation type="submission" date="2006-02" db="EMBL/GenBank/DDBJ databases">
        <title>Complete sequence of chromosome of Jannaschia sp. CCS1.</title>
        <authorList>
            <consortium name="US DOE Joint Genome Institute"/>
            <person name="Copeland A."/>
            <person name="Lucas S."/>
            <person name="Lapidus A."/>
            <person name="Barry K."/>
            <person name="Detter J.C."/>
            <person name="Glavina del Rio T."/>
            <person name="Hammon N."/>
            <person name="Israni S."/>
            <person name="Pitluck S."/>
            <person name="Brettin T."/>
            <person name="Bruce D."/>
            <person name="Han C."/>
            <person name="Tapia R."/>
            <person name="Gilna P."/>
            <person name="Chertkov O."/>
            <person name="Saunders E."/>
            <person name="Schmutz J."/>
            <person name="Larimer F."/>
            <person name="Land M."/>
            <person name="Kyrpides N."/>
            <person name="Lykidis A."/>
            <person name="Moran M.A."/>
            <person name="Belas R."/>
            <person name="Ye W."/>
            <person name="Buchan A."/>
            <person name="Gonzalez J.M."/>
            <person name="Schell M.A."/>
            <person name="Richardson P."/>
        </authorList>
    </citation>
    <scope>NUCLEOTIDE SEQUENCE [LARGE SCALE GENOMIC DNA]</scope>
    <source>
        <strain>CCS1</strain>
    </source>
</reference>
<protein>
    <recommendedName>
        <fullName evidence="1">Beta-ketoacyl-[acyl-carrier-protein] synthase III</fullName>
        <shortName evidence="1">Beta-ketoacyl-ACP synthase III</shortName>
        <shortName evidence="1">KAS III</shortName>
        <ecNumber evidence="1">2.3.1.180</ecNumber>
    </recommendedName>
    <alternativeName>
        <fullName evidence="1">3-oxoacyl-[acyl-carrier-protein] synthase 3</fullName>
    </alternativeName>
    <alternativeName>
        <fullName evidence="1">3-oxoacyl-[acyl-carrier-protein] synthase III</fullName>
    </alternativeName>
</protein>